<comment type="function">
    <text evidence="1">Catalyzes the excretion of spermidine.</text>
</comment>
<comment type="subunit">
    <text evidence="1">Forms a complex with MdtI.</text>
</comment>
<comment type="subcellular location">
    <subcellularLocation>
        <location evidence="1">Cell inner membrane</location>
        <topology evidence="1">Multi-pass membrane protein</topology>
    </subcellularLocation>
</comment>
<comment type="similarity">
    <text evidence="1">Belongs to the drug/metabolite transporter (DMT) superfamily. Small multidrug resistance (SMR) (TC 2.A.7.1) family. MdtJ subfamily.</text>
</comment>
<keyword id="KW-0997">Cell inner membrane</keyword>
<keyword id="KW-1003">Cell membrane</keyword>
<keyword id="KW-0472">Membrane</keyword>
<keyword id="KW-1185">Reference proteome</keyword>
<keyword id="KW-0812">Transmembrane</keyword>
<keyword id="KW-1133">Transmembrane helix</keyword>
<keyword id="KW-0813">Transport</keyword>
<protein>
    <recommendedName>
        <fullName evidence="1">Spermidine export protein MdtJ</fullName>
    </recommendedName>
</protein>
<feature type="chain" id="PRO_1000197334" description="Spermidine export protein MdtJ">
    <location>
        <begin position="1"/>
        <end position="146"/>
    </location>
</feature>
<feature type="transmembrane region" description="Helical" evidence="1">
    <location>
        <begin position="1"/>
        <end position="21"/>
    </location>
</feature>
<feature type="transmembrane region" description="Helical" evidence="1">
    <location>
        <begin position="31"/>
        <end position="51"/>
    </location>
</feature>
<feature type="transmembrane region" description="Helical" evidence="1">
    <location>
        <begin position="54"/>
        <end position="74"/>
    </location>
</feature>
<feature type="transmembrane region" description="Helical" evidence="1">
    <location>
        <begin position="76"/>
        <end position="96"/>
    </location>
</feature>
<dbReference type="EMBL" id="AM942759">
    <property type="protein sequence ID" value="CAR42476.1"/>
    <property type="molecule type" value="Genomic_DNA"/>
</dbReference>
<dbReference type="RefSeq" id="WP_012367881.1">
    <property type="nucleotide sequence ID" value="NC_010554.1"/>
</dbReference>
<dbReference type="SMR" id="B4EVU5"/>
<dbReference type="EnsemblBacteria" id="CAR42476">
    <property type="protein sequence ID" value="CAR42476"/>
    <property type="gene ID" value="PMI1158"/>
</dbReference>
<dbReference type="GeneID" id="6803664"/>
<dbReference type="KEGG" id="pmr:PMI1158"/>
<dbReference type="eggNOG" id="COG2076">
    <property type="taxonomic scope" value="Bacteria"/>
</dbReference>
<dbReference type="HOGENOM" id="CLU_133067_0_0_6"/>
<dbReference type="Proteomes" id="UP000008319">
    <property type="component" value="Chromosome"/>
</dbReference>
<dbReference type="GO" id="GO:0005886">
    <property type="term" value="C:plasma membrane"/>
    <property type="evidence" value="ECO:0007669"/>
    <property type="project" value="UniProtKB-SubCell"/>
</dbReference>
<dbReference type="GO" id="GO:0015199">
    <property type="term" value="F:amino-acid betaine transmembrane transporter activity"/>
    <property type="evidence" value="ECO:0007669"/>
    <property type="project" value="TreeGrafter"/>
</dbReference>
<dbReference type="GO" id="GO:0015297">
    <property type="term" value="F:antiporter activity"/>
    <property type="evidence" value="ECO:0007669"/>
    <property type="project" value="TreeGrafter"/>
</dbReference>
<dbReference type="GO" id="GO:0015220">
    <property type="term" value="F:choline transmembrane transporter activity"/>
    <property type="evidence" value="ECO:0007669"/>
    <property type="project" value="TreeGrafter"/>
</dbReference>
<dbReference type="GO" id="GO:0015606">
    <property type="term" value="F:spermidine transmembrane transporter activity"/>
    <property type="evidence" value="ECO:0007669"/>
    <property type="project" value="UniProtKB-UniRule"/>
</dbReference>
<dbReference type="GO" id="GO:0031460">
    <property type="term" value="P:glycine betaine transport"/>
    <property type="evidence" value="ECO:0007669"/>
    <property type="project" value="TreeGrafter"/>
</dbReference>
<dbReference type="FunFam" id="1.10.3730.20:FF:000001">
    <property type="entry name" value="Quaternary ammonium compound resistance transporter SugE"/>
    <property type="match status" value="1"/>
</dbReference>
<dbReference type="Gene3D" id="1.10.3730.20">
    <property type="match status" value="1"/>
</dbReference>
<dbReference type="HAMAP" id="MF_01598">
    <property type="entry name" value="MdtJ"/>
    <property type="match status" value="1"/>
</dbReference>
<dbReference type="InterPro" id="IPR000390">
    <property type="entry name" value="Small_drug/metabolite_transptr"/>
</dbReference>
<dbReference type="InterPro" id="IPR045324">
    <property type="entry name" value="Small_multidrug_res"/>
</dbReference>
<dbReference type="InterPro" id="IPR023740">
    <property type="entry name" value="Spermidine_export_MdtJ"/>
</dbReference>
<dbReference type="NCBIfam" id="NF007767">
    <property type="entry name" value="PRK10452.1"/>
    <property type="match status" value="1"/>
</dbReference>
<dbReference type="PANTHER" id="PTHR30561">
    <property type="entry name" value="SMR FAMILY PROTON-DEPENDENT DRUG EFFLUX TRANSPORTER SUGE"/>
    <property type="match status" value="1"/>
</dbReference>
<dbReference type="PANTHER" id="PTHR30561:SF2">
    <property type="entry name" value="SPERMIDINE EXPORT PROTEIN MDTJ"/>
    <property type="match status" value="1"/>
</dbReference>
<dbReference type="Pfam" id="PF00893">
    <property type="entry name" value="Multi_Drug_Res"/>
    <property type="match status" value="1"/>
</dbReference>
<dbReference type="SUPFAM" id="SSF103481">
    <property type="entry name" value="Multidrug resistance efflux transporter EmrE"/>
    <property type="match status" value="1"/>
</dbReference>
<reference key="1">
    <citation type="journal article" date="2008" name="J. Bacteriol.">
        <title>Complete genome sequence of uropathogenic Proteus mirabilis, a master of both adherence and motility.</title>
        <authorList>
            <person name="Pearson M.M."/>
            <person name="Sebaihia M."/>
            <person name="Churcher C."/>
            <person name="Quail M.A."/>
            <person name="Seshasayee A.S."/>
            <person name="Luscombe N.M."/>
            <person name="Abdellah Z."/>
            <person name="Arrosmith C."/>
            <person name="Atkin B."/>
            <person name="Chillingworth T."/>
            <person name="Hauser H."/>
            <person name="Jagels K."/>
            <person name="Moule S."/>
            <person name="Mungall K."/>
            <person name="Norbertczak H."/>
            <person name="Rabbinowitsch E."/>
            <person name="Walker D."/>
            <person name="Whithead S."/>
            <person name="Thomson N.R."/>
            <person name="Rather P.N."/>
            <person name="Parkhill J."/>
            <person name="Mobley H.L.T."/>
        </authorList>
    </citation>
    <scope>NUCLEOTIDE SEQUENCE [LARGE SCALE GENOMIC DNA]</scope>
    <source>
        <strain>HI4320</strain>
    </source>
</reference>
<evidence type="ECO:0000255" key="1">
    <source>
        <dbReference type="HAMAP-Rule" id="MF_01598"/>
    </source>
</evidence>
<proteinExistence type="inferred from homology"/>
<accession>B4EVU5</accession>
<organism>
    <name type="scientific">Proteus mirabilis (strain HI4320)</name>
    <dbReference type="NCBI Taxonomy" id="529507"/>
    <lineage>
        <taxon>Bacteria</taxon>
        <taxon>Pseudomonadati</taxon>
        <taxon>Pseudomonadota</taxon>
        <taxon>Gammaproteobacteria</taxon>
        <taxon>Enterobacterales</taxon>
        <taxon>Morganellaceae</taxon>
        <taxon>Proteus</taxon>
    </lineage>
</organism>
<name>MDTJ_PROMH</name>
<gene>
    <name evidence="1" type="primary">mdtJ</name>
    <name type="ordered locus">PMI1158</name>
</gene>
<sequence>MIYWIFLVLAIICEVIGTLSMKYASVSGGYTGMIVMWLMIATSYIFLAIAVKKVALGVAYALWEGIGIVIITTFSVLWFGESLSALKLGGLAMLIAGITLIKSGTKKSVVAKKTTDSVKNIAGKAKQVATVVKGVNKPISSNVKEA</sequence>